<reference key="1">
    <citation type="journal article" date="2007" name="PLoS Genet.">
        <title>The complete genome sequence of Yersinia pseudotuberculosis IP31758, the causative agent of Far East scarlet-like fever.</title>
        <authorList>
            <person name="Eppinger M."/>
            <person name="Rosovitz M.J."/>
            <person name="Fricke W.F."/>
            <person name="Rasko D.A."/>
            <person name="Kokorina G."/>
            <person name="Fayolle C."/>
            <person name="Lindler L.E."/>
            <person name="Carniel E."/>
            <person name="Ravel J."/>
        </authorList>
    </citation>
    <scope>NUCLEOTIDE SEQUENCE [LARGE SCALE GENOMIC DNA]</scope>
    <source>
        <strain>IP 31758</strain>
    </source>
</reference>
<gene>
    <name evidence="1" type="primary">ruvB</name>
    <name type="ordered locus">YpsIP31758_2030</name>
</gene>
<accession>A7FIC5</accession>
<comment type="function">
    <text evidence="1">The RuvA-RuvB-RuvC complex processes Holliday junction (HJ) DNA during genetic recombination and DNA repair, while the RuvA-RuvB complex plays an important role in the rescue of blocked DNA replication forks via replication fork reversal (RFR). RuvA specifically binds to HJ cruciform DNA, conferring on it an open structure. The RuvB hexamer acts as an ATP-dependent pump, pulling dsDNA into and through the RuvAB complex. RuvB forms 2 homohexamers on either side of HJ DNA bound by 1 or 2 RuvA tetramers; 4 subunits per hexamer contact DNA at a time. Coordinated motions by a converter formed by DNA-disengaged RuvB subunits stimulates ATP hydrolysis and nucleotide exchange. Immobilization of the converter enables RuvB to convert the ATP-contained energy into a lever motion, pulling 2 nucleotides of DNA out of the RuvA tetramer per ATP hydrolyzed, thus driving DNA branch migration. The RuvB motors rotate together with the DNA substrate, which together with the progressing nucleotide cycle form the mechanistic basis for DNA recombination by continuous HJ branch migration. Branch migration allows RuvC to scan DNA until it finds its consensus sequence, where it cleaves and resolves cruciform DNA.</text>
</comment>
<comment type="catalytic activity">
    <reaction evidence="1">
        <text>ATP + H2O = ADP + phosphate + H(+)</text>
        <dbReference type="Rhea" id="RHEA:13065"/>
        <dbReference type="ChEBI" id="CHEBI:15377"/>
        <dbReference type="ChEBI" id="CHEBI:15378"/>
        <dbReference type="ChEBI" id="CHEBI:30616"/>
        <dbReference type="ChEBI" id="CHEBI:43474"/>
        <dbReference type="ChEBI" id="CHEBI:456216"/>
    </reaction>
</comment>
<comment type="subunit">
    <text evidence="1">Homohexamer. Forms an RuvA(8)-RuvB(12)-Holliday junction (HJ) complex. HJ DNA is sandwiched between 2 RuvA tetramers; dsDNA enters through RuvA and exits via RuvB. An RuvB hexamer assembles on each DNA strand where it exits the tetramer. Each RuvB hexamer is contacted by two RuvA subunits (via domain III) on 2 adjacent RuvB subunits; this complex drives branch migration. In the full resolvosome a probable DNA-RuvA(4)-RuvB(12)-RuvC(2) complex forms which resolves the HJ.</text>
</comment>
<comment type="subcellular location">
    <subcellularLocation>
        <location evidence="1">Cytoplasm</location>
    </subcellularLocation>
</comment>
<comment type="domain">
    <text evidence="1">Has 3 domains, the large (RuvB-L) and small ATPase (RuvB-S) domains and the C-terminal head (RuvB-H) domain. The head domain binds DNA, while the ATPase domains jointly bind ATP, ADP or are empty depending on the state of the subunit in the translocation cycle. During a single DNA translocation step the structure of each domain remains the same, but their relative positions change.</text>
</comment>
<comment type="similarity">
    <text evidence="1">Belongs to the RuvB family.</text>
</comment>
<protein>
    <recommendedName>
        <fullName evidence="1">Holliday junction branch migration complex subunit RuvB</fullName>
        <ecNumber evidence="1">3.6.4.-</ecNumber>
    </recommendedName>
</protein>
<name>RUVB_YERP3</name>
<evidence type="ECO:0000255" key="1">
    <source>
        <dbReference type="HAMAP-Rule" id="MF_00016"/>
    </source>
</evidence>
<organism>
    <name type="scientific">Yersinia pseudotuberculosis serotype O:1b (strain IP 31758)</name>
    <dbReference type="NCBI Taxonomy" id="349747"/>
    <lineage>
        <taxon>Bacteria</taxon>
        <taxon>Pseudomonadati</taxon>
        <taxon>Pseudomonadota</taxon>
        <taxon>Gammaproteobacteria</taxon>
        <taxon>Enterobacterales</taxon>
        <taxon>Yersiniaceae</taxon>
        <taxon>Yersinia</taxon>
    </lineage>
</organism>
<keyword id="KW-0067">ATP-binding</keyword>
<keyword id="KW-0963">Cytoplasm</keyword>
<keyword id="KW-0227">DNA damage</keyword>
<keyword id="KW-0233">DNA recombination</keyword>
<keyword id="KW-0234">DNA repair</keyword>
<keyword id="KW-0238">DNA-binding</keyword>
<keyword id="KW-0378">Hydrolase</keyword>
<keyword id="KW-0547">Nucleotide-binding</keyword>
<dbReference type="EC" id="3.6.4.-" evidence="1"/>
<dbReference type="EMBL" id="CP000720">
    <property type="protein sequence ID" value="ABS46956.1"/>
    <property type="molecule type" value="Genomic_DNA"/>
</dbReference>
<dbReference type="RefSeq" id="WP_002211198.1">
    <property type="nucleotide sequence ID" value="NC_009708.1"/>
</dbReference>
<dbReference type="SMR" id="A7FIC5"/>
<dbReference type="GeneID" id="57976603"/>
<dbReference type="KEGG" id="ypi:YpsIP31758_2030"/>
<dbReference type="HOGENOM" id="CLU_055599_1_0_6"/>
<dbReference type="Proteomes" id="UP000002412">
    <property type="component" value="Chromosome"/>
</dbReference>
<dbReference type="GO" id="GO:0005737">
    <property type="term" value="C:cytoplasm"/>
    <property type="evidence" value="ECO:0007669"/>
    <property type="project" value="UniProtKB-SubCell"/>
</dbReference>
<dbReference type="GO" id="GO:0048476">
    <property type="term" value="C:Holliday junction resolvase complex"/>
    <property type="evidence" value="ECO:0007669"/>
    <property type="project" value="UniProtKB-UniRule"/>
</dbReference>
<dbReference type="GO" id="GO:0005524">
    <property type="term" value="F:ATP binding"/>
    <property type="evidence" value="ECO:0007669"/>
    <property type="project" value="UniProtKB-UniRule"/>
</dbReference>
<dbReference type="GO" id="GO:0016887">
    <property type="term" value="F:ATP hydrolysis activity"/>
    <property type="evidence" value="ECO:0007669"/>
    <property type="project" value="InterPro"/>
</dbReference>
<dbReference type="GO" id="GO:0000400">
    <property type="term" value="F:four-way junction DNA binding"/>
    <property type="evidence" value="ECO:0007669"/>
    <property type="project" value="UniProtKB-UniRule"/>
</dbReference>
<dbReference type="GO" id="GO:0009378">
    <property type="term" value="F:four-way junction helicase activity"/>
    <property type="evidence" value="ECO:0007669"/>
    <property type="project" value="InterPro"/>
</dbReference>
<dbReference type="GO" id="GO:0006310">
    <property type="term" value="P:DNA recombination"/>
    <property type="evidence" value="ECO:0007669"/>
    <property type="project" value="UniProtKB-UniRule"/>
</dbReference>
<dbReference type="GO" id="GO:0006281">
    <property type="term" value="P:DNA repair"/>
    <property type="evidence" value="ECO:0007669"/>
    <property type="project" value="UniProtKB-UniRule"/>
</dbReference>
<dbReference type="CDD" id="cd00009">
    <property type="entry name" value="AAA"/>
    <property type="match status" value="1"/>
</dbReference>
<dbReference type="FunFam" id="1.10.10.10:FF:000086">
    <property type="entry name" value="Holliday junction ATP-dependent DNA helicase RuvB"/>
    <property type="match status" value="1"/>
</dbReference>
<dbReference type="FunFam" id="1.10.8.60:FF:000023">
    <property type="entry name" value="Holliday junction ATP-dependent DNA helicase RuvB"/>
    <property type="match status" value="1"/>
</dbReference>
<dbReference type="FunFam" id="3.40.50.300:FF:000073">
    <property type="entry name" value="Holliday junction ATP-dependent DNA helicase RuvB"/>
    <property type="match status" value="1"/>
</dbReference>
<dbReference type="Gene3D" id="1.10.8.60">
    <property type="match status" value="1"/>
</dbReference>
<dbReference type="Gene3D" id="3.40.50.300">
    <property type="entry name" value="P-loop containing nucleotide triphosphate hydrolases"/>
    <property type="match status" value="1"/>
</dbReference>
<dbReference type="Gene3D" id="1.10.10.10">
    <property type="entry name" value="Winged helix-like DNA-binding domain superfamily/Winged helix DNA-binding domain"/>
    <property type="match status" value="1"/>
</dbReference>
<dbReference type="HAMAP" id="MF_00016">
    <property type="entry name" value="DNA_HJ_migration_RuvB"/>
    <property type="match status" value="1"/>
</dbReference>
<dbReference type="InterPro" id="IPR003593">
    <property type="entry name" value="AAA+_ATPase"/>
</dbReference>
<dbReference type="InterPro" id="IPR041445">
    <property type="entry name" value="AAA_lid_4"/>
</dbReference>
<dbReference type="InterPro" id="IPR004605">
    <property type="entry name" value="DNA_helicase_Holl-junc_RuvB"/>
</dbReference>
<dbReference type="InterPro" id="IPR027417">
    <property type="entry name" value="P-loop_NTPase"/>
</dbReference>
<dbReference type="InterPro" id="IPR008824">
    <property type="entry name" value="RuvB-like_N"/>
</dbReference>
<dbReference type="InterPro" id="IPR008823">
    <property type="entry name" value="RuvB_C"/>
</dbReference>
<dbReference type="InterPro" id="IPR036388">
    <property type="entry name" value="WH-like_DNA-bd_sf"/>
</dbReference>
<dbReference type="InterPro" id="IPR036390">
    <property type="entry name" value="WH_DNA-bd_sf"/>
</dbReference>
<dbReference type="NCBIfam" id="NF000868">
    <property type="entry name" value="PRK00080.1"/>
    <property type="match status" value="1"/>
</dbReference>
<dbReference type="NCBIfam" id="TIGR00635">
    <property type="entry name" value="ruvB"/>
    <property type="match status" value="1"/>
</dbReference>
<dbReference type="PANTHER" id="PTHR42848">
    <property type="match status" value="1"/>
</dbReference>
<dbReference type="PANTHER" id="PTHR42848:SF1">
    <property type="entry name" value="HOLLIDAY JUNCTION BRANCH MIGRATION COMPLEX SUBUNIT RUVB"/>
    <property type="match status" value="1"/>
</dbReference>
<dbReference type="Pfam" id="PF17864">
    <property type="entry name" value="AAA_lid_4"/>
    <property type="match status" value="1"/>
</dbReference>
<dbReference type="Pfam" id="PF05491">
    <property type="entry name" value="RuvB_C"/>
    <property type="match status" value="1"/>
</dbReference>
<dbReference type="Pfam" id="PF05496">
    <property type="entry name" value="RuvB_N"/>
    <property type="match status" value="1"/>
</dbReference>
<dbReference type="SMART" id="SM00382">
    <property type="entry name" value="AAA"/>
    <property type="match status" value="1"/>
</dbReference>
<dbReference type="SUPFAM" id="SSF52540">
    <property type="entry name" value="P-loop containing nucleoside triphosphate hydrolases"/>
    <property type="match status" value="1"/>
</dbReference>
<dbReference type="SUPFAM" id="SSF46785">
    <property type="entry name" value="Winged helix' DNA-binding domain"/>
    <property type="match status" value="1"/>
</dbReference>
<feature type="chain" id="PRO_1000057146" description="Holliday junction branch migration complex subunit RuvB">
    <location>
        <begin position="1"/>
        <end position="334"/>
    </location>
</feature>
<feature type="region of interest" description="Large ATPase domain (RuvB-L)" evidence="1">
    <location>
        <begin position="4"/>
        <end position="184"/>
    </location>
</feature>
<feature type="region of interest" description="Small ATPAse domain (RuvB-S)" evidence="1">
    <location>
        <begin position="185"/>
        <end position="255"/>
    </location>
</feature>
<feature type="region of interest" description="Head domain (RuvB-H)" evidence="1">
    <location>
        <begin position="258"/>
        <end position="334"/>
    </location>
</feature>
<feature type="binding site" evidence="1">
    <location>
        <position position="23"/>
    </location>
    <ligand>
        <name>ATP</name>
        <dbReference type="ChEBI" id="CHEBI:30616"/>
    </ligand>
</feature>
<feature type="binding site" evidence="1">
    <location>
        <position position="24"/>
    </location>
    <ligand>
        <name>ATP</name>
        <dbReference type="ChEBI" id="CHEBI:30616"/>
    </ligand>
</feature>
<feature type="binding site" evidence="1">
    <location>
        <position position="65"/>
    </location>
    <ligand>
        <name>ATP</name>
        <dbReference type="ChEBI" id="CHEBI:30616"/>
    </ligand>
</feature>
<feature type="binding site" evidence="1">
    <location>
        <position position="68"/>
    </location>
    <ligand>
        <name>ATP</name>
        <dbReference type="ChEBI" id="CHEBI:30616"/>
    </ligand>
</feature>
<feature type="binding site" evidence="1">
    <location>
        <position position="69"/>
    </location>
    <ligand>
        <name>ATP</name>
        <dbReference type="ChEBI" id="CHEBI:30616"/>
    </ligand>
</feature>
<feature type="binding site" evidence="1">
    <location>
        <position position="69"/>
    </location>
    <ligand>
        <name>Mg(2+)</name>
        <dbReference type="ChEBI" id="CHEBI:18420"/>
    </ligand>
</feature>
<feature type="binding site" evidence="1">
    <location>
        <position position="70"/>
    </location>
    <ligand>
        <name>ATP</name>
        <dbReference type="ChEBI" id="CHEBI:30616"/>
    </ligand>
</feature>
<feature type="binding site" evidence="1">
    <location>
        <begin position="131"/>
        <end position="133"/>
    </location>
    <ligand>
        <name>ATP</name>
        <dbReference type="ChEBI" id="CHEBI:30616"/>
    </ligand>
</feature>
<feature type="binding site" evidence="1">
    <location>
        <position position="174"/>
    </location>
    <ligand>
        <name>ATP</name>
        <dbReference type="ChEBI" id="CHEBI:30616"/>
    </ligand>
</feature>
<feature type="binding site" evidence="1">
    <location>
        <position position="184"/>
    </location>
    <ligand>
        <name>ATP</name>
        <dbReference type="ChEBI" id="CHEBI:30616"/>
    </ligand>
</feature>
<feature type="binding site" evidence="1">
    <location>
        <position position="221"/>
    </location>
    <ligand>
        <name>ATP</name>
        <dbReference type="ChEBI" id="CHEBI:30616"/>
    </ligand>
</feature>
<feature type="binding site" evidence="1">
    <location>
        <position position="294"/>
    </location>
    <ligand>
        <name>DNA</name>
        <dbReference type="ChEBI" id="CHEBI:16991"/>
    </ligand>
</feature>
<feature type="binding site" evidence="1">
    <location>
        <position position="313"/>
    </location>
    <ligand>
        <name>DNA</name>
        <dbReference type="ChEBI" id="CHEBI:16991"/>
    </ligand>
</feature>
<feature type="binding site" evidence="1">
    <location>
        <position position="318"/>
    </location>
    <ligand>
        <name>DNA</name>
        <dbReference type="ChEBI" id="CHEBI:16991"/>
    </ligand>
</feature>
<proteinExistence type="inferred from homology"/>
<sequence>MIEADRLISAAVINDEESIDRAIRPKLLTEYVGQPHVREQMEIFIQAAKQRGDALDHVLIFGPPGLGKTTLANIIANEMGVNLRTTSGPVLEKAGDLAAMLTNLEPHDVLFIDEIHRLSPVVEEILYPAMEDYQLDIMIGEGPAARSIKLDLPPFTLIGATTRAGSLTSPLRDRFGIVQRLEFYQVADLEHIVSRSAKCLGLELTPEGAHQLARRSRGTPRITNRLLRRVRDFAEVRADGAINGEVAMKALDMLNVDAEGFDFMDRKLLLAVIDKFMGGPVGLDNLAAAIGEERETIEDVLEPYLIQQGFIQRTPRGRIATNHAYKHFGITREE</sequence>